<organism>
    <name type="scientific">Danio rerio</name>
    <name type="common">Zebrafish</name>
    <name type="synonym">Brachydanio rerio</name>
    <dbReference type="NCBI Taxonomy" id="7955"/>
    <lineage>
        <taxon>Eukaryota</taxon>
        <taxon>Metazoa</taxon>
        <taxon>Chordata</taxon>
        <taxon>Craniata</taxon>
        <taxon>Vertebrata</taxon>
        <taxon>Euteleostomi</taxon>
        <taxon>Actinopterygii</taxon>
        <taxon>Neopterygii</taxon>
        <taxon>Teleostei</taxon>
        <taxon>Ostariophysi</taxon>
        <taxon>Cypriniformes</taxon>
        <taxon>Danionidae</taxon>
        <taxon>Danioninae</taxon>
        <taxon>Danio</taxon>
    </lineage>
</organism>
<protein>
    <recommendedName>
        <fullName>Swi5-dependent recombination DNA repair protein 1 homolog</fullName>
    </recommendedName>
    <alternativeName>
        <fullName>Meiosis protein 5 homolog</fullName>
    </alternativeName>
</protein>
<feature type="chain" id="PRO_0000406977" description="Swi5-dependent recombination DNA repair protein 1 homolog">
    <location>
        <begin position="1"/>
        <end position="201"/>
    </location>
</feature>
<feature type="region of interest" description="Disordered" evidence="4">
    <location>
        <begin position="1"/>
        <end position="111"/>
    </location>
</feature>
<feature type="coiled-coil region" evidence="3">
    <location>
        <begin position="109"/>
        <end position="131"/>
    </location>
</feature>
<feature type="compositionally biased region" description="Polar residues" evidence="4">
    <location>
        <begin position="12"/>
        <end position="29"/>
    </location>
</feature>
<feature type="compositionally biased region" description="Basic and acidic residues" evidence="4">
    <location>
        <begin position="71"/>
        <end position="103"/>
    </location>
</feature>
<feature type="sequence conflict" description="In Ref. 2; AAI33893." evidence="5" ref="2">
    <original>P</original>
    <variation>S</variation>
    <location>
        <position position="30"/>
    </location>
</feature>
<feature type="sequence conflict" description="In Ref. 2; AAI33893." evidence="5" ref="2">
    <original>N</original>
    <variation>D</variation>
    <location>
        <position position="185"/>
    </location>
</feature>
<reference key="1">
    <citation type="journal article" date="2013" name="Nature">
        <title>The zebrafish reference genome sequence and its relationship to the human genome.</title>
        <authorList>
            <person name="Howe K."/>
            <person name="Clark M.D."/>
            <person name="Torroja C.F."/>
            <person name="Torrance J."/>
            <person name="Berthelot C."/>
            <person name="Muffato M."/>
            <person name="Collins J.E."/>
            <person name="Humphray S."/>
            <person name="McLaren K."/>
            <person name="Matthews L."/>
            <person name="McLaren S."/>
            <person name="Sealy I."/>
            <person name="Caccamo M."/>
            <person name="Churcher C."/>
            <person name="Scott C."/>
            <person name="Barrett J.C."/>
            <person name="Koch R."/>
            <person name="Rauch G.J."/>
            <person name="White S."/>
            <person name="Chow W."/>
            <person name="Kilian B."/>
            <person name="Quintais L.T."/>
            <person name="Guerra-Assuncao J.A."/>
            <person name="Zhou Y."/>
            <person name="Gu Y."/>
            <person name="Yen J."/>
            <person name="Vogel J.H."/>
            <person name="Eyre T."/>
            <person name="Redmond S."/>
            <person name="Banerjee R."/>
            <person name="Chi J."/>
            <person name="Fu B."/>
            <person name="Langley E."/>
            <person name="Maguire S.F."/>
            <person name="Laird G.K."/>
            <person name="Lloyd D."/>
            <person name="Kenyon E."/>
            <person name="Donaldson S."/>
            <person name="Sehra H."/>
            <person name="Almeida-King J."/>
            <person name="Loveland J."/>
            <person name="Trevanion S."/>
            <person name="Jones M."/>
            <person name="Quail M."/>
            <person name="Willey D."/>
            <person name="Hunt A."/>
            <person name="Burton J."/>
            <person name="Sims S."/>
            <person name="McLay K."/>
            <person name="Plumb B."/>
            <person name="Davis J."/>
            <person name="Clee C."/>
            <person name="Oliver K."/>
            <person name="Clark R."/>
            <person name="Riddle C."/>
            <person name="Elliot D."/>
            <person name="Threadgold G."/>
            <person name="Harden G."/>
            <person name="Ware D."/>
            <person name="Begum S."/>
            <person name="Mortimore B."/>
            <person name="Kerry G."/>
            <person name="Heath P."/>
            <person name="Phillimore B."/>
            <person name="Tracey A."/>
            <person name="Corby N."/>
            <person name="Dunn M."/>
            <person name="Johnson C."/>
            <person name="Wood J."/>
            <person name="Clark S."/>
            <person name="Pelan S."/>
            <person name="Griffiths G."/>
            <person name="Smith M."/>
            <person name="Glithero R."/>
            <person name="Howden P."/>
            <person name="Barker N."/>
            <person name="Lloyd C."/>
            <person name="Stevens C."/>
            <person name="Harley J."/>
            <person name="Holt K."/>
            <person name="Panagiotidis G."/>
            <person name="Lovell J."/>
            <person name="Beasley H."/>
            <person name="Henderson C."/>
            <person name="Gordon D."/>
            <person name="Auger K."/>
            <person name="Wright D."/>
            <person name="Collins J."/>
            <person name="Raisen C."/>
            <person name="Dyer L."/>
            <person name="Leung K."/>
            <person name="Robertson L."/>
            <person name="Ambridge K."/>
            <person name="Leongamornlert D."/>
            <person name="McGuire S."/>
            <person name="Gilderthorp R."/>
            <person name="Griffiths C."/>
            <person name="Manthravadi D."/>
            <person name="Nichol S."/>
            <person name="Barker G."/>
            <person name="Whitehead S."/>
            <person name="Kay M."/>
            <person name="Brown J."/>
            <person name="Murnane C."/>
            <person name="Gray E."/>
            <person name="Humphries M."/>
            <person name="Sycamore N."/>
            <person name="Barker D."/>
            <person name="Saunders D."/>
            <person name="Wallis J."/>
            <person name="Babbage A."/>
            <person name="Hammond S."/>
            <person name="Mashreghi-Mohammadi M."/>
            <person name="Barr L."/>
            <person name="Martin S."/>
            <person name="Wray P."/>
            <person name="Ellington A."/>
            <person name="Matthews N."/>
            <person name="Ellwood M."/>
            <person name="Woodmansey R."/>
            <person name="Clark G."/>
            <person name="Cooper J."/>
            <person name="Tromans A."/>
            <person name="Grafham D."/>
            <person name="Skuce C."/>
            <person name="Pandian R."/>
            <person name="Andrews R."/>
            <person name="Harrison E."/>
            <person name="Kimberley A."/>
            <person name="Garnett J."/>
            <person name="Fosker N."/>
            <person name="Hall R."/>
            <person name="Garner P."/>
            <person name="Kelly D."/>
            <person name="Bird C."/>
            <person name="Palmer S."/>
            <person name="Gehring I."/>
            <person name="Berger A."/>
            <person name="Dooley C.M."/>
            <person name="Ersan-Urun Z."/>
            <person name="Eser C."/>
            <person name="Geiger H."/>
            <person name="Geisler M."/>
            <person name="Karotki L."/>
            <person name="Kirn A."/>
            <person name="Konantz J."/>
            <person name="Konantz M."/>
            <person name="Oberlander M."/>
            <person name="Rudolph-Geiger S."/>
            <person name="Teucke M."/>
            <person name="Lanz C."/>
            <person name="Raddatz G."/>
            <person name="Osoegawa K."/>
            <person name="Zhu B."/>
            <person name="Rapp A."/>
            <person name="Widaa S."/>
            <person name="Langford C."/>
            <person name="Yang F."/>
            <person name="Schuster S.C."/>
            <person name="Carter N.P."/>
            <person name="Harrow J."/>
            <person name="Ning Z."/>
            <person name="Herrero J."/>
            <person name="Searle S.M."/>
            <person name="Enright A."/>
            <person name="Geisler R."/>
            <person name="Plasterk R.H."/>
            <person name="Lee C."/>
            <person name="Westerfield M."/>
            <person name="de Jong P.J."/>
            <person name="Zon L.I."/>
            <person name="Postlethwait J.H."/>
            <person name="Nusslein-Volhard C."/>
            <person name="Hubbard T.J."/>
            <person name="Roest Crollius H."/>
            <person name="Rogers J."/>
            <person name="Stemple D.L."/>
        </authorList>
    </citation>
    <scope>NUCLEOTIDE SEQUENCE [LARGE SCALE GENOMIC DNA]</scope>
    <source>
        <strain>Tuebingen</strain>
    </source>
</reference>
<reference key="2">
    <citation type="submission" date="2007-03" db="EMBL/GenBank/DDBJ databases">
        <authorList>
            <consortium name="NIH - Zebrafish Gene Collection (ZGC) project"/>
        </authorList>
    </citation>
    <scope>NUCLEOTIDE SEQUENCE [LARGE SCALE MRNA]</scope>
    <source>
        <tissue>Ovary</tissue>
    </source>
</reference>
<gene>
    <name type="primary">sfr1</name>
    <name type="synonym">mei5</name>
    <name type="synonym">meir5</name>
    <name type="ORF">si:ch211-223p8.4</name>
    <name type="ORF">zgc:162162</name>
</gene>
<comment type="function">
    <text evidence="1">Component of the swi5-sfr1 complex, a complex required for double-strand break repair via homologous recombination.</text>
</comment>
<comment type="subunit">
    <text evidence="1">Component of the swi5-sfr1 complex.</text>
</comment>
<comment type="subcellular location">
    <subcellularLocation>
        <location evidence="2">Nucleus</location>
    </subcellularLocation>
</comment>
<comment type="similarity">
    <text evidence="5">Belongs to the SFR1/MEI5 family.</text>
</comment>
<evidence type="ECO:0000250" key="1">
    <source>
        <dbReference type="UniProtKB" id="Q86XK3"/>
    </source>
</evidence>
<evidence type="ECO:0000250" key="2">
    <source>
        <dbReference type="UniProtKB" id="Q8BP27"/>
    </source>
</evidence>
<evidence type="ECO:0000255" key="3"/>
<evidence type="ECO:0000256" key="4">
    <source>
        <dbReference type="SAM" id="MobiDB-lite"/>
    </source>
</evidence>
<evidence type="ECO:0000305" key="5"/>
<accession>B7ZD04</accession>
<accession>A3KNK5</accession>
<name>SFR1_DANRE</name>
<sequence>METTPIKPTAADETTPSAEQSSNRSSTAKPMSASLREKLKRSRHSFKSPLSVVKRLKIEDDTEPQPSQQGEEEKHGVKDDRDSNVTETDVNRNDMKLQRDSNHTAELPSQQCEALRKAVKERTETLRRLKMVKMYRKKNDLNELQRLTDKWRSCAQSVLYELQRELATGGKQASLSQLIDSFGINDKLLHFDRTEEDFTDT</sequence>
<keyword id="KW-0175">Coiled coil</keyword>
<keyword id="KW-0227">DNA damage</keyword>
<keyword id="KW-0234">DNA repair</keyword>
<keyword id="KW-0539">Nucleus</keyword>
<keyword id="KW-1185">Reference proteome</keyword>
<keyword id="KW-0804">Transcription</keyword>
<keyword id="KW-0805">Transcription regulation</keyword>
<dbReference type="EMBL" id="AL929005">
    <property type="protein sequence ID" value="CAX14339.1"/>
    <property type="molecule type" value="Genomic_DNA"/>
</dbReference>
<dbReference type="EMBL" id="BC133892">
    <property type="protein sequence ID" value="AAI33893.1"/>
    <property type="molecule type" value="mRNA"/>
</dbReference>
<dbReference type="RefSeq" id="NP_001076329.1">
    <property type="nucleotide sequence ID" value="NM_001082860.1"/>
</dbReference>
<dbReference type="RefSeq" id="XP_068069010.1">
    <property type="nucleotide sequence ID" value="XM_068212909.1"/>
</dbReference>
<dbReference type="SMR" id="B7ZD04"/>
<dbReference type="FunCoup" id="B7ZD04">
    <property type="interactions" value="1451"/>
</dbReference>
<dbReference type="STRING" id="7955.ENSDARP00000037070"/>
<dbReference type="PaxDb" id="7955-ENSDARP00000037070"/>
<dbReference type="Ensembl" id="ENSDART00000031564">
    <property type="protein sequence ID" value="ENSDARP00000037070"/>
    <property type="gene ID" value="ENSDARG00000021974"/>
</dbReference>
<dbReference type="GeneID" id="568747"/>
<dbReference type="KEGG" id="dre:568747"/>
<dbReference type="AGR" id="ZFIN:ZDB-GENE-070410-27"/>
<dbReference type="CTD" id="119392"/>
<dbReference type="ZFIN" id="ZDB-GENE-070410-27">
    <property type="gene designation" value="sfr1"/>
</dbReference>
<dbReference type="eggNOG" id="ENOG502S1QX">
    <property type="taxonomic scope" value="Eukaryota"/>
</dbReference>
<dbReference type="HOGENOM" id="CLU_075586_1_0_1"/>
<dbReference type="InParanoid" id="B7ZD04"/>
<dbReference type="OMA" id="RSFNANF"/>
<dbReference type="OrthoDB" id="10051617at2759"/>
<dbReference type="PhylomeDB" id="B7ZD04"/>
<dbReference type="TreeFam" id="TF332725"/>
<dbReference type="PRO" id="PR:B7ZD04"/>
<dbReference type="Proteomes" id="UP000000437">
    <property type="component" value="Chromosome 13"/>
</dbReference>
<dbReference type="Bgee" id="ENSDARG00000021974">
    <property type="expression patterns" value="Expressed in testis and 24 other cell types or tissues"/>
</dbReference>
<dbReference type="GO" id="GO:0005634">
    <property type="term" value="C:nucleus"/>
    <property type="evidence" value="ECO:0000250"/>
    <property type="project" value="UniProtKB"/>
</dbReference>
<dbReference type="GO" id="GO:0032798">
    <property type="term" value="C:Swi5-Sfr1 complex"/>
    <property type="evidence" value="ECO:0000250"/>
    <property type="project" value="UniProtKB"/>
</dbReference>
<dbReference type="GO" id="GO:0003713">
    <property type="term" value="F:transcription coactivator activity"/>
    <property type="evidence" value="ECO:0000318"/>
    <property type="project" value="GO_Central"/>
</dbReference>
<dbReference type="GO" id="GO:0000724">
    <property type="term" value="P:double-strand break repair via homologous recombination"/>
    <property type="evidence" value="ECO:0000250"/>
    <property type="project" value="UniProtKB"/>
</dbReference>
<dbReference type="GO" id="GO:0045893">
    <property type="term" value="P:positive regulation of DNA-templated transcription"/>
    <property type="evidence" value="ECO:0000318"/>
    <property type="project" value="GO_Central"/>
</dbReference>
<dbReference type="Gene3D" id="6.10.140.1020">
    <property type="match status" value="1"/>
</dbReference>
<dbReference type="InterPro" id="IPR042429">
    <property type="entry name" value="SFR1"/>
</dbReference>
<dbReference type="InterPro" id="IPR018468">
    <property type="entry name" value="SFR1/Mei5"/>
</dbReference>
<dbReference type="PANTHER" id="PTHR28643">
    <property type="entry name" value="SWI5-DEPENDENT RECOMBINATION DNA REPAIR PROTEIN 1 HOMOLOG"/>
    <property type="match status" value="1"/>
</dbReference>
<dbReference type="PANTHER" id="PTHR28643:SF1">
    <property type="entry name" value="SWI5-DEPENDENT RECOMBINATION DNA REPAIR PROTEIN 1 HOMOLOG"/>
    <property type="match status" value="1"/>
</dbReference>
<dbReference type="Pfam" id="PF10376">
    <property type="entry name" value="Mei5"/>
    <property type="match status" value="1"/>
</dbReference>
<proteinExistence type="evidence at transcript level"/>